<dbReference type="EC" id="2.7.2.3" evidence="1"/>
<dbReference type="EMBL" id="CP000503">
    <property type="protein sequence ID" value="ABM26113.1"/>
    <property type="molecule type" value="Genomic_DNA"/>
</dbReference>
<dbReference type="RefSeq" id="WP_011790561.1">
    <property type="nucleotide sequence ID" value="NC_008750.1"/>
</dbReference>
<dbReference type="SMR" id="A1RN68"/>
<dbReference type="KEGG" id="shw:Sputw3181_3299"/>
<dbReference type="HOGENOM" id="CLU_025427_0_2_6"/>
<dbReference type="UniPathway" id="UPA00109">
    <property type="reaction ID" value="UER00185"/>
</dbReference>
<dbReference type="Proteomes" id="UP000002597">
    <property type="component" value="Chromosome"/>
</dbReference>
<dbReference type="GO" id="GO:0005829">
    <property type="term" value="C:cytosol"/>
    <property type="evidence" value="ECO:0007669"/>
    <property type="project" value="TreeGrafter"/>
</dbReference>
<dbReference type="GO" id="GO:0043531">
    <property type="term" value="F:ADP binding"/>
    <property type="evidence" value="ECO:0007669"/>
    <property type="project" value="TreeGrafter"/>
</dbReference>
<dbReference type="GO" id="GO:0005524">
    <property type="term" value="F:ATP binding"/>
    <property type="evidence" value="ECO:0007669"/>
    <property type="project" value="UniProtKB-KW"/>
</dbReference>
<dbReference type="GO" id="GO:0004618">
    <property type="term" value="F:phosphoglycerate kinase activity"/>
    <property type="evidence" value="ECO:0007669"/>
    <property type="project" value="UniProtKB-UniRule"/>
</dbReference>
<dbReference type="GO" id="GO:0006094">
    <property type="term" value="P:gluconeogenesis"/>
    <property type="evidence" value="ECO:0007669"/>
    <property type="project" value="TreeGrafter"/>
</dbReference>
<dbReference type="GO" id="GO:0006096">
    <property type="term" value="P:glycolytic process"/>
    <property type="evidence" value="ECO:0007669"/>
    <property type="project" value="UniProtKB-UniRule"/>
</dbReference>
<dbReference type="FunFam" id="3.40.50.1260:FF:000001">
    <property type="entry name" value="Phosphoglycerate kinase"/>
    <property type="match status" value="1"/>
</dbReference>
<dbReference type="FunFam" id="3.40.50.1260:FF:000002">
    <property type="entry name" value="Phosphoglycerate kinase"/>
    <property type="match status" value="1"/>
</dbReference>
<dbReference type="Gene3D" id="3.40.50.1260">
    <property type="entry name" value="Phosphoglycerate kinase, N-terminal domain"/>
    <property type="match status" value="2"/>
</dbReference>
<dbReference type="HAMAP" id="MF_00145">
    <property type="entry name" value="Phosphoglyc_kinase"/>
    <property type="match status" value="1"/>
</dbReference>
<dbReference type="InterPro" id="IPR001576">
    <property type="entry name" value="Phosphoglycerate_kinase"/>
</dbReference>
<dbReference type="InterPro" id="IPR015911">
    <property type="entry name" value="Phosphoglycerate_kinase_CS"/>
</dbReference>
<dbReference type="InterPro" id="IPR015824">
    <property type="entry name" value="Phosphoglycerate_kinase_N"/>
</dbReference>
<dbReference type="InterPro" id="IPR036043">
    <property type="entry name" value="Phosphoglycerate_kinase_sf"/>
</dbReference>
<dbReference type="PANTHER" id="PTHR11406">
    <property type="entry name" value="PHOSPHOGLYCERATE KINASE"/>
    <property type="match status" value="1"/>
</dbReference>
<dbReference type="PANTHER" id="PTHR11406:SF23">
    <property type="entry name" value="PHOSPHOGLYCERATE KINASE 1, CHLOROPLASTIC-RELATED"/>
    <property type="match status" value="1"/>
</dbReference>
<dbReference type="Pfam" id="PF00162">
    <property type="entry name" value="PGK"/>
    <property type="match status" value="1"/>
</dbReference>
<dbReference type="PIRSF" id="PIRSF000724">
    <property type="entry name" value="Pgk"/>
    <property type="match status" value="1"/>
</dbReference>
<dbReference type="PRINTS" id="PR00477">
    <property type="entry name" value="PHGLYCKINASE"/>
</dbReference>
<dbReference type="SUPFAM" id="SSF53748">
    <property type="entry name" value="Phosphoglycerate kinase"/>
    <property type="match status" value="1"/>
</dbReference>
<dbReference type="PROSITE" id="PS00111">
    <property type="entry name" value="PGLYCERATE_KINASE"/>
    <property type="match status" value="1"/>
</dbReference>
<gene>
    <name evidence="1" type="primary">pgk</name>
    <name type="ordered locus">Sputw3181_3299</name>
</gene>
<accession>A1RN68</accession>
<feature type="chain" id="PRO_1000058063" description="Phosphoglycerate kinase">
    <location>
        <begin position="1"/>
        <end position="391"/>
    </location>
</feature>
<feature type="binding site" evidence="1">
    <location>
        <begin position="21"/>
        <end position="23"/>
    </location>
    <ligand>
        <name>substrate</name>
    </ligand>
</feature>
<feature type="binding site" evidence="1">
    <location>
        <position position="36"/>
    </location>
    <ligand>
        <name>substrate</name>
    </ligand>
</feature>
<feature type="binding site" evidence="1">
    <location>
        <begin position="59"/>
        <end position="62"/>
    </location>
    <ligand>
        <name>substrate</name>
    </ligand>
</feature>
<feature type="binding site" evidence="1">
    <location>
        <position position="113"/>
    </location>
    <ligand>
        <name>substrate</name>
    </ligand>
</feature>
<feature type="binding site" evidence="1">
    <location>
        <position position="146"/>
    </location>
    <ligand>
        <name>substrate</name>
    </ligand>
</feature>
<feature type="binding site" evidence="1">
    <location>
        <position position="197"/>
    </location>
    <ligand>
        <name>ATP</name>
        <dbReference type="ChEBI" id="CHEBI:30616"/>
    </ligand>
</feature>
<feature type="binding site" evidence="1">
    <location>
        <position position="319"/>
    </location>
    <ligand>
        <name>ATP</name>
        <dbReference type="ChEBI" id="CHEBI:30616"/>
    </ligand>
</feature>
<feature type="binding site" evidence="1">
    <location>
        <begin position="345"/>
        <end position="348"/>
    </location>
    <ligand>
        <name>ATP</name>
        <dbReference type="ChEBI" id="CHEBI:30616"/>
    </ligand>
</feature>
<proteinExistence type="inferred from homology"/>
<evidence type="ECO:0000255" key="1">
    <source>
        <dbReference type="HAMAP-Rule" id="MF_00145"/>
    </source>
</evidence>
<name>PGK_SHESW</name>
<protein>
    <recommendedName>
        <fullName evidence="1">Phosphoglycerate kinase</fullName>
        <ecNumber evidence="1">2.7.2.3</ecNumber>
    </recommendedName>
</protein>
<sequence length="391" mass="40669">MAIINMSDLDLQGKRVLIREDLNVPVSNGVVTSDARLRASLPTIELALAKGAAVMVMSHLGRPTEGEYNSEFSMQPVVDYLAKALSCTVRLATDYLDGVEVAVGEVVVFENVRFNKGEKKNDEALSKKMAALCDVYVMDAFGTAHRAEASTNGVGLYAPIACAGPLLAQELDALGKALDNPARPLVAIVGGSKVSTKLTVLESLSGIVDQLVVGGGIANTFIAAAGHNVGKSLYEADLIDEAKRLVANAQSRGGDIPVPTDVVVAGEFSPTATATLKSVSDVSDSDMIFDIGPDSAEALAKIIESAGTIVWNGPVGVFEFDQFGEGTKRIAQAIADSKAFSIAGGGDTLAAVDKYGIADKVSYISTGGGAFLEFLEGKELPAVAMLKKRGA</sequence>
<keyword id="KW-0067">ATP-binding</keyword>
<keyword id="KW-0963">Cytoplasm</keyword>
<keyword id="KW-0324">Glycolysis</keyword>
<keyword id="KW-0418">Kinase</keyword>
<keyword id="KW-0547">Nucleotide-binding</keyword>
<keyword id="KW-0808">Transferase</keyword>
<organism>
    <name type="scientific">Shewanella sp. (strain W3-18-1)</name>
    <dbReference type="NCBI Taxonomy" id="351745"/>
    <lineage>
        <taxon>Bacteria</taxon>
        <taxon>Pseudomonadati</taxon>
        <taxon>Pseudomonadota</taxon>
        <taxon>Gammaproteobacteria</taxon>
        <taxon>Alteromonadales</taxon>
        <taxon>Shewanellaceae</taxon>
        <taxon>Shewanella</taxon>
    </lineage>
</organism>
<comment type="catalytic activity">
    <reaction evidence="1">
        <text>(2R)-3-phosphoglycerate + ATP = (2R)-3-phospho-glyceroyl phosphate + ADP</text>
        <dbReference type="Rhea" id="RHEA:14801"/>
        <dbReference type="ChEBI" id="CHEBI:30616"/>
        <dbReference type="ChEBI" id="CHEBI:57604"/>
        <dbReference type="ChEBI" id="CHEBI:58272"/>
        <dbReference type="ChEBI" id="CHEBI:456216"/>
        <dbReference type="EC" id="2.7.2.3"/>
    </reaction>
</comment>
<comment type="pathway">
    <text evidence="1">Carbohydrate degradation; glycolysis; pyruvate from D-glyceraldehyde 3-phosphate: step 2/5.</text>
</comment>
<comment type="subunit">
    <text evidence="1">Monomer.</text>
</comment>
<comment type="subcellular location">
    <subcellularLocation>
        <location evidence="1">Cytoplasm</location>
    </subcellularLocation>
</comment>
<comment type="similarity">
    <text evidence="1">Belongs to the phosphoglycerate kinase family.</text>
</comment>
<reference key="1">
    <citation type="submission" date="2006-12" db="EMBL/GenBank/DDBJ databases">
        <title>Complete sequence of Shewanella sp. W3-18-1.</title>
        <authorList>
            <consortium name="US DOE Joint Genome Institute"/>
            <person name="Copeland A."/>
            <person name="Lucas S."/>
            <person name="Lapidus A."/>
            <person name="Barry K."/>
            <person name="Detter J.C."/>
            <person name="Glavina del Rio T."/>
            <person name="Hammon N."/>
            <person name="Israni S."/>
            <person name="Dalin E."/>
            <person name="Tice H."/>
            <person name="Pitluck S."/>
            <person name="Chain P."/>
            <person name="Malfatti S."/>
            <person name="Shin M."/>
            <person name="Vergez L."/>
            <person name="Schmutz J."/>
            <person name="Larimer F."/>
            <person name="Land M."/>
            <person name="Hauser L."/>
            <person name="Kyrpides N."/>
            <person name="Lykidis A."/>
            <person name="Tiedje J."/>
            <person name="Richardson P."/>
        </authorList>
    </citation>
    <scope>NUCLEOTIDE SEQUENCE [LARGE SCALE GENOMIC DNA]</scope>
    <source>
        <strain>W3-18-1</strain>
    </source>
</reference>